<dbReference type="EMBL" id="CP000468">
    <property type="protein sequence ID" value="ABI99652.1"/>
    <property type="molecule type" value="Genomic_DNA"/>
</dbReference>
<dbReference type="RefSeq" id="WP_000246882.1">
    <property type="nucleotide sequence ID" value="NZ_CADILS010000027.1"/>
</dbReference>
<dbReference type="SMR" id="A1A7L3"/>
<dbReference type="GeneID" id="89519558"/>
<dbReference type="KEGG" id="ecv:APECO1_1818"/>
<dbReference type="HOGENOM" id="CLU_040318_1_2_6"/>
<dbReference type="Proteomes" id="UP000008216">
    <property type="component" value="Chromosome"/>
</dbReference>
<dbReference type="GO" id="GO:0022627">
    <property type="term" value="C:cytosolic small ribosomal subunit"/>
    <property type="evidence" value="ECO:0007669"/>
    <property type="project" value="TreeGrafter"/>
</dbReference>
<dbReference type="GO" id="GO:0003735">
    <property type="term" value="F:structural constituent of ribosome"/>
    <property type="evidence" value="ECO:0007669"/>
    <property type="project" value="InterPro"/>
</dbReference>
<dbReference type="GO" id="GO:0006412">
    <property type="term" value="P:translation"/>
    <property type="evidence" value="ECO:0007669"/>
    <property type="project" value="UniProtKB-UniRule"/>
</dbReference>
<dbReference type="CDD" id="cd01425">
    <property type="entry name" value="RPS2"/>
    <property type="match status" value="1"/>
</dbReference>
<dbReference type="FunFam" id="1.10.287.610:FF:000001">
    <property type="entry name" value="30S ribosomal protein S2"/>
    <property type="match status" value="1"/>
</dbReference>
<dbReference type="Gene3D" id="3.40.50.10490">
    <property type="entry name" value="Glucose-6-phosphate isomerase like protein, domain 1"/>
    <property type="match status" value="1"/>
</dbReference>
<dbReference type="Gene3D" id="1.10.287.610">
    <property type="entry name" value="Helix hairpin bin"/>
    <property type="match status" value="1"/>
</dbReference>
<dbReference type="HAMAP" id="MF_00291_B">
    <property type="entry name" value="Ribosomal_uS2_B"/>
    <property type="match status" value="1"/>
</dbReference>
<dbReference type="InterPro" id="IPR001865">
    <property type="entry name" value="Ribosomal_uS2"/>
</dbReference>
<dbReference type="InterPro" id="IPR005706">
    <property type="entry name" value="Ribosomal_uS2_bac/mit/plastid"/>
</dbReference>
<dbReference type="InterPro" id="IPR018130">
    <property type="entry name" value="Ribosomal_uS2_CS"/>
</dbReference>
<dbReference type="InterPro" id="IPR023591">
    <property type="entry name" value="Ribosomal_uS2_flav_dom_sf"/>
</dbReference>
<dbReference type="NCBIfam" id="TIGR01011">
    <property type="entry name" value="rpsB_bact"/>
    <property type="match status" value="1"/>
</dbReference>
<dbReference type="PANTHER" id="PTHR12534">
    <property type="entry name" value="30S RIBOSOMAL PROTEIN S2 PROKARYOTIC AND ORGANELLAR"/>
    <property type="match status" value="1"/>
</dbReference>
<dbReference type="PANTHER" id="PTHR12534:SF0">
    <property type="entry name" value="SMALL RIBOSOMAL SUBUNIT PROTEIN US2M"/>
    <property type="match status" value="1"/>
</dbReference>
<dbReference type="Pfam" id="PF00318">
    <property type="entry name" value="Ribosomal_S2"/>
    <property type="match status" value="1"/>
</dbReference>
<dbReference type="PRINTS" id="PR00395">
    <property type="entry name" value="RIBOSOMALS2"/>
</dbReference>
<dbReference type="SUPFAM" id="SSF52313">
    <property type="entry name" value="Ribosomal protein S2"/>
    <property type="match status" value="1"/>
</dbReference>
<dbReference type="PROSITE" id="PS00962">
    <property type="entry name" value="RIBOSOMAL_S2_1"/>
    <property type="match status" value="1"/>
</dbReference>
<dbReference type="PROSITE" id="PS00963">
    <property type="entry name" value="RIBOSOMAL_S2_2"/>
    <property type="match status" value="1"/>
</dbReference>
<sequence length="241" mass="26744">MATVSMRDMLKAGVHFGHQTRYWNPKMKPFIFGARNKVHIINLEKTVPMFNEALAELNKIASRKGKILFVGTKRAASEAVKDAALSCDQFFVNHRWLGGMLTNWKTVRQSIKRLKDLETQSQDGTFDKLTKKEALMRTRELEKLENSLGGIKDMGGLPDALFVIDADHEHIAIKEANNLGIPVFAIVDTNSDPDGVDFVIPGNDDAIRAVTLYLGAVAATVREGRSQDLASQAEESFVEAE</sequence>
<accession>A1A7L3</accession>
<gene>
    <name evidence="1" type="primary">rpsB</name>
    <name type="ordered locus">Ecok1_01590</name>
    <name type="ORF">APECO1_1818</name>
</gene>
<keyword id="KW-1185">Reference proteome</keyword>
<keyword id="KW-0687">Ribonucleoprotein</keyword>
<keyword id="KW-0689">Ribosomal protein</keyword>
<reference key="1">
    <citation type="journal article" date="2007" name="J. Bacteriol.">
        <title>The genome sequence of avian pathogenic Escherichia coli strain O1:K1:H7 shares strong similarities with human extraintestinal pathogenic E. coli genomes.</title>
        <authorList>
            <person name="Johnson T.J."/>
            <person name="Kariyawasam S."/>
            <person name="Wannemuehler Y."/>
            <person name="Mangiamele P."/>
            <person name="Johnson S.J."/>
            <person name="Doetkott C."/>
            <person name="Skyberg J.A."/>
            <person name="Lynne A.M."/>
            <person name="Johnson J.R."/>
            <person name="Nolan L.K."/>
        </authorList>
    </citation>
    <scope>NUCLEOTIDE SEQUENCE [LARGE SCALE GENOMIC DNA]</scope>
</reference>
<evidence type="ECO:0000255" key="1">
    <source>
        <dbReference type="HAMAP-Rule" id="MF_00291"/>
    </source>
</evidence>
<evidence type="ECO:0000305" key="2"/>
<organism>
    <name type="scientific">Escherichia coli O1:K1 / APEC</name>
    <dbReference type="NCBI Taxonomy" id="405955"/>
    <lineage>
        <taxon>Bacteria</taxon>
        <taxon>Pseudomonadati</taxon>
        <taxon>Pseudomonadota</taxon>
        <taxon>Gammaproteobacteria</taxon>
        <taxon>Enterobacterales</taxon>
        <taxon>Enterobacteriaceae</taxon>
        <taxon>Escherichia</taxon>
    </lineage>
</organism>
<comment type="similarity">
    <text evidence="1">Belongs to the universal ribosomal protein uS2 family.</text>
</comment>
<feature type="chain" id="PRO_1000003953" description="Small ribosomal subunit protein uS2">
    <location>
        <begin position="1"/>
        <end position="241"/>
    </location>
</feature>
<name>RS2_ECOK1</name>
<protein>
    <recommendedName>
        <fullName evidence="1">Small ribosomal subunit protein uS2</fullName>
    </recommendedName>
    <alternativeName>
        <fullName evidence="2">30S ribosomal protein S2</fullName>
    </alternativeName>
</protein>
<proteinExistence type="inferred from homology"/>